<comment type="function">
    <text evidence="1">Transfers the 4'-phosphopantetheine moiety from coenzyme A to a Ser of acyl-carrier-protein.</text>
</comment>
<comment type="catalytic activity">
    <reaction evidence="1">
        <text>apo-[ACP] + CoA = holo-[ACP] + adenosine 3',5'-bisphosphate + H(+)</text>
        <dbReference type="Rhea" id="RHEA:12068"/>
        <dbReference type="Rhea" id="RHEA-COMP:9685"/>
        <dbReference type="Rhea" id="RHEA-COMP:9690"/>
        <dbReference type="ChEBI" id="CHEBI:15378"/>
        <dbReference type="ChEBI" id="CHEBI:29999"/>
        <dbReference type="ChEBI" id="CHEBI:57287"/>
        <dbReference type="ChEBI" id="CHEBI:58343"/>
        <dbReference type="ChEBI" id="CHEBI:64479"/>
        <dbReference type="EC" id="2.7.8.7"/>
    </reaction>
</comment>
<comment type="cofactor">
    <cofactor evidence="1">
        <name>Mg(2+)</name>
        <dbReference type="ChEBI" id="CHEBI:18420"/>
    </cofactor>
</comment>
<comment type="subcellular location">
    <subcellularLocation>
        <location evidence="1">Cytoplasm</location>
    </subcellularLocation>
</comment>
<comment type="similarity">
    <text evidence="1">Belongs to the P-Pant transferase superfamily. AcpS family.</text>
</comment>
<dbReference type="EC" id="2.7.8.7" evidence="1"/>
<dbReference type="EMBL" id="CP000927">
    <property type="protein sequence ID" value="ABZ70863.1"/>
    <property type="molecule type" value="Genomic_DNA"/>
</dbReference>
<dbReference type="SMR" id="B0T3H7"/>
<dbReference type="STRING" id="366602.Caul_1734"/>
<dbReference type="KEGG" id="cak:Caul_1734"/>
<dbReference type="eggNOG" id="COG0736">
    <property type="taxonomic scope" value="Bacteria"/>
</dbReference>
<dbReference type="HOGENOM" id="CLU_089696_0_2_5"/>
<dbReference type="OrthoDB" id="517356at2"/>
<dbReference type="GO" id="GO:0005737">
    <property type="term" value="C:cytoplasm"/>
    <property type="evidence" value="ECO:0007669"/>
    <property type="project" value="UniProtKB-SubCell"/>
</dbReference>
<dbReference type="GO" id="GO:0008897">
    <property type="term" value="F:holo-[acyl-carrier-protein] synthase activity"/>
    <property type="evidence" value="ECO:0007669"/>
    <property type="project" value="UniProtKB-UniRule"/>
</dbReference>
<dbReference type="GO" id="GO:0000287">
    <property type="term" value="F:magnesium ion binding"/>
    <property type="evidence" value="ECO:0007669"/>
    <property type="project" value="UniProtKB-UniRule"/>
</dbReference>
<dbReference type="GO" id="GO:0006633">
    <property type="term" value="P:fatty acid biosynthetic process"/>
    <property type="evidence" value="ECO:0007669"/>
    <property type="project" value="UniProtKB-UniRule"/>
</dbReference>
<dbReference type="Gene3D" id="3.90.470.20">
    <property type="entry name" value="4'-phosphopantetheinyl transferase domain"/>
    <property type="match status" value="1"/>
</dbReference>
<dbReference type="HAMAP" id="MF_00101">
    <property type="entry name" value="AcpS"/>
    <property type="match status" value="1"/>
</dbReference>
<dbReference type="InterPro" id="IPR008278">
    <property type="entry name" value="4-PPantetheinyl_Trfase_dom"/>
</dbReference>
<dbReference type="InterPro" id="IPR037143">
    <property type="entry name" value="4-PPantetheinyl_Trfase_dom_sf"/>
</dbReference>
<dbReference type="InterPro" id="IPR002582">
    <property type="entry name" value="ACPS"/>
</dbReference>
<dbReference type="InterPro" id="IPR004568">
    <property type="entry name" value="Ppantetheine-prot_Trfase_dom"/>
</dbReference>
<dbReference type="NCBIfam" id="TIGR00516">
    <property type="entry name" value="acpS"/>
    <property type="match status" value="1"/>
</dbReference>
<dbReference type="NCBIfam" id="TIGR00556">
    <property type="entry name" value="pantethn_trn"/>
    <property type="match status" value="1"/>
</dbReference>
<dbReference type="Pfam" id="PF01648">
    <property type="entry name" value="ACPS"/>
    <property type="match status" value="1"/>
</dbReference>
<dbReference type="SUPFAM" id="SSF56214">
    <property type="entry name" value="4'-phosphopantetheinyl transferase"/>
    <property type="match status" value="1"/>
</dbReference>
<proteinExistence type="inferred from homology"/>
<name>ACPS_CAUSK</name>
<evidence type="ECO:0000255" key="1">
    <source>
        <dbReference type="HAMAP-Rule" id="MF_00101"/>
    </source>
</evidence>
<protein>
    <recommendedName>
        <fullName evidence="1">Holo-[acyl-carrier-protein] synthase</fullName>
        <shortName evidence="1">Holo-ACP synthase</shortName>
        <ecNumber evidence="1">2.7.8.7</ecNumber>
    </recommendedName>
    <alternativeName>
        <fullName evidence="1">4'-phosphopantetheinyl transferase AcpS</fullName>
    </alternativeName>
</protein>
<reference key="1">
    <citation type="submission" date="2008-01" db="EMBL/GenBank/DDBJ databases">
        <title>Complete sequence of chromosome of Caulobacter sp. K31.</title>
        <authorList>
            <consortium name="US DOE Joint Genome Institute"/>
            <person name="Copeland A."/>
            <person name="Lucas S."/>
            <person name="Lapidus A."/>
            <person name="Barry K."/>
            <person name="Glavina del Rio T."/>
            <person name="Dalin E."/>
            <person name="Tice H."/>
            <person name="Pitluck S."/>
            <person name="Bruce D."/>
            <person name="Goodwin L."/>
            <person name="Thompson L.S."/>
            <person name="Brettin T."/>
            <person name="Detter J.C."/>
            <person name="Han C."/>
            <person name="Schmutz J."/>
            <person name="Larimer F."/>
            <person name="Land M."/>
            <person name="Hauser L."/>
            <person name="Kyrpides N."/>
            <person name="Kim E."/>
            <person name="Stephens C."/>
            <person name="Richardson P."/>
        </authorList>
    </citation>
    <scope>NUCLEOTIDE SEQUENCE [LARGE SCALE GENOMIC DNA]</scope>
    <source>
        <strain>K31</strain>
    </source>
</reference>
<accession>B0T3H7</accession>
<organism>
    <name type="scientific">Caulobacter sp. (strain K31)</name>
    <dbReference type="NCBI Taxonomy" id="366602"/>
    <lineage>
        <taxon>Bacteria</taxon>
        <taxon>Pseudomonadati</taxon>
        <taxon>Pseudomonadota</taxon>
        <taxon>Alphaproteobacteria</taxon>
        <taxon>Caulobacterales</taxon>
        <taxon>Caulobacteraceae</taxon>
        <taxon>Caulobacter</taxon>
    </lineage>
</organism>
<keyword id="KW-0963">Cytoplasm</keyword>
<keyword id="KW-0275">Fatty acid biosynthesis</keyword>
<keyword id="KW-0276">Fatty acid metabolism</keyword>
<keyword id="KW-0444">Lipid biosynthesis</keyword>
<keyword id="KW-0443">Lipid metabolism</keyword>
<keyword id="KW-0460">Magnesium</keyword>
<keyword id="KW-0479">Metal-binding</keyword>
<keyword id="KW-0808">Transferase</keyword>
<sequence length="133" mass="14345">MIIGIGSDLCDIRRIEKTLERFGDRFTHKSFTEIERRRSERKPDRASSYAKRFAAKEACSKALGTGLKGGVHLSGMGVVNLPSGKPTMALTGGAAERLASMVPEGMTPVIHLSLTDDHPYAQAFVIIEAVAAT</sequence>
<gene>
    <name evidence="1" type="primary">acpS</name>
    <name type="ordered locus">Caul_1734</name>
</gene>
<feature type="chain" id="PRO_1000075633" description="Holo-[acyl-carrier-protein] synthase">
    <location>
        <begin position="1"/>
        <end position="133"/>
    </location>
</feature>
<feature type="binding site" evidence="1">
    <location>
        <position position="8"/>
    </location>
    <ligand>
        <name>Mg(2+)</name>
        <dbReference type="ChEBI" id="CHEBI:18420"/>
    </ligand>
</feature>
<feature type="binding site" evidence="1">
    <location>
        <position position="57"/>
    </location>
    <ligand>
        <name>Mg(2+)</name>
        <dbReference type="ChEBI" id="CHEBI:18420"/>
    </ligand>
</feature>